<keyword id="KW-0520">NAD</keyword>
<keyword id="KW-0521">NADP</keyword>
<keyword id="KW-0560">Oxidoreductase</keyword>
<comment type="function">
    <text evidence="1">Could reduce the 13-carbonyl of daunorubicin to produce (13S)-13-dihydrodaunorubicin. Could also be able to reduce the 13-carbonyl of doxorubicin (By similarity).</text>
</comment>
<comment type="similarity">
    <text evidence="2">Belongs to the short-chain dehydrogenases/reductases (SDR) family.</text>
</comment>
<accession>Q53877</accession>
<dbReference type="EC" id="1.1.1.-"/>
<dbReference type="EMBL" id="U43704">
    <property type="protein sequence ID" value="AAB08016.1"/>
    <property type="molecule type" value="Genomic_DNA"/>
</dbReference>
<dbReference type="SMR" id="Q53877"/>
<dbReference type="GO" id="GO:0016616">
    <property type="term" value="F:oxidoreductase activity, acting on the CH-OH group of donors, NAD or NADP as acceptor"/>
    <property type="evidence" value="ECO:0000250"/>
    <property type="project" value="UniProtKB"/>
</dbReference>
<dbReference type="FunFam" id="3.40.50.720:FF:000971">
    <property type="entry name" value="Putative daunorubicin C-13 ketoreductase DnrU"/>
    <property type="match status" value="1"/>
</dbReference>
<dbReference type="Gene3D" id="3.40.50.720">
    <property type="entry name" value="NAD(P)-binding Rossmann-like Domain"/>
    <property type="match status" value="1"/>
</dbReference>
<dbReference type="InterPro" id="IPR036291">
    <property type="entry name" value="NAD(P)-bd_dom_sf"/>
</dbReference>
<dbReference type="InterPro" id="IPR002347">
    <property type="entry name" value="SDR_fam"/>
</dbReference>
<dbReference type="PANTHER" id="PTHR43157:SF31">
    <property type="entry name" value="PHOSPHATIDYLINOSITOL-GLYCAN BIOSYNTHESIS CLASS F PROTEIN"/>
    <property type="match status" value="1"/>
</dbReference>
<dbReference type="PANTHER" id="PTHR43157">
    <property type="entry name" value="PHOSPHATIDYLINOSITOL-GLYCAN BIOSYNTHESIS CLASS F PROTEIN-RELATED"/>
    <property type="match status" value="1"/>
</dbReference>
<dbReference type="Pfam" id="PF00106">
    <property type="entry name" value="adh_short"/>
    <property type="match status" value="1"/>
</dbReference>
<dbReference type="PRINTS" id="PR00081">
    <property type="entry name" value="GDHRDH"/>
</dbReference>
<dbReference type="SMART" id="SM00822">
    <property type="entry name" value="PKS_KR"/>
    <property type="match status" value="1"/>
</dbReference>
<dbReference type="SUPFAM" id="SSF51735">
    <property type="entry name" value="NAD(P)-binding Rossmann-fold domains"/>
    <property type="match status" value="1"/>
</dbReference>
<name>DNRU_STRS5</name>
<organism>
    <name type="scientific">Streptomyces sp. (strain C5)</name>
    <dbReference type="NCBI Taxonomy" id="45212"/>
    <lineage>
        <taxon>Bacteria</taxon>
        <taxon>Bacillati</taxon>
        <taxon>Actinomycetota</taxon>
        <taxon>Actinomycetes</taxon>
        <taxon>Kitasatosporales</taxon>
        <taxon>Streptomycetaceae</taxon>
        <taxon>Streptomyces</taxon>
    </lineage>
</organism>
<sequence length="287" mass="30800">MTVPTPRHGTPHGGLPGRTVLITGATSGIGRAAALAIARQGARVVLVGRDPERLRTVTNEVARTAGPAPDAFRADFAELRQVRELGERLRDRYPRIDVMAGNAGGMFWSRTTTQDGFEATLQVNHLAGFLLARLLRERLAGGRLILTSSDAYTQGRIDPDDLNGDRHRYSAGQAYGTSKQANIMTATEAARRWPDVLTVSYHPGEVRTRIGRGTVASTYFRFNPFLRSAAKGADTLVWLAAAPAEELTTGGYYSDRRLSPVSGPTADAGLAAKLWEASAAAVGDTAR</sequence>
<protein>
    <recommendedName>
        <fullName>Putative daunorubicin C-13 ketoreductase DnrU</fullName>
        <ecNumber>1.1.1.-</ecNumber>
    </recommendedName>
</protein>
<evidence type="ECO:0000250" key="1"/>
<evidence type="ECO:0000305" key="2"/>
<reference key="1">
    <citation type="journal article" date="1996" name="J. Bacteriol.">
        <title>Cloning, sequencing, and analysis of aklaviketone reductase from Streptomyces sp. strain C5.</title>
        <authorList>
            <person name="Dickens M.L."/>
            <person name="Ye J."/>
            <person name="Strohl W.R."/>
        </authorList>
    </citation>
    <scope>NUCLEOTIDE SEQUENCE [GENOMIC DNA]</scope>
    <source>
        <strain>C5</strain>
    </source>
</reference>
<feature type="chain" id="PRO_0000425689" description="Putative daunorubicin C-13 ketoreductase DnrU">
    <location>
        <begin position="1"/>
        <end position="287"/>
    </location>
</feature>
<feature type="active site" description="Proton acceptor" evidence="1">
    <location>
        <position position="175"/>
    </location>
</feature>
<feature type="binding site" evidence="1">
    <location>
        <begin position="24"/>
        <end position="30"/>
    </location>
    <ligand>
        <name>NADP(+)</name>
        <dbReference type="ChEBI" id="CHEBI:58349"/>
    </ligand>
</feature>
<feature type="binding site" evidence="1">
    <location>
        <position position="149"/>
    </location>
    <ligand>
        <name>substrate</name>
    </ligand>
</feature>
<proteinExistence type="inferred from homology"/>